<comment type="function">
    <text evidence="4 6 7 10 11 12 13 14">Together with closely related FUS3, KSS1 is the final kinase in the signal transduction cascade regulating activation/repression of the mating and filamentation pathways, induced by pheromone and nitrogen/carbon limitation, respectively. Phosphorylated KSS1 activates both pathways, whereas activated FUS3 activates the mating but suppresses the filamentation pathway. KSS1 activity is down-regulated by FUS3 during pheromone induction to prevent inappropriate activation of the filamentation pathway. During induction of filamentation, KSS1 activates the transcription factor STE12 resulting in its binding to and activation of filamentation specific genes. Non-activated KSS1 has a kinase-independent repressive effect on STE12 transcriptional activity, that is mediated by direct binding to STE12 and depends on the presence of DIG1 and DIG2, and that is required for the suppression of filamentation under normal growth conditions. SSN3/SRB10 contributes further to the suppression of filamentation under these conditions by reducing STE12 stability independent of KSS1. FUS3 can partially compensate for the lack of KSS1 but filamentation becomes constitutively induced at a low level in the absence of any signal. KSS1 phosphorylates STE7, STE5, FAR1, DIG1, DIG2, STE12, and SST2.</text>
</comment>
<comment type="catalytic activity">
    <reaction>
        <text>L-seryl-[protein] + ATP = O-phospho-L-seryl-[protein] + ADP + H(+)</text>
        <dbReference type="Rhea" id="RHEA:17989"/>
        <dbReference type="Rhea" id="RHEA-COMP:9863"/>
        <dbReference type="Rhea" id="RHEA-COMP:11604"/>
        <dbReference type="ChEBI" id="CHEBI:15378"/>
        <dbReference type="ChEBI" id="CHEBI:29999"/>
        <dbReference type="ChEBI" id="CHEBI:30616"/>
        <dbReference type="ChEBI" id="CHEBI:83421"/>
        <dbReference type="ChEBI" id="CHEBI:456216"/>
        <dbReference type="EC" id="2.7.11.24"/>
    </reaction>
</comment>
<comment type="catalytic activity">
    <reaction>
        <text>L-threonyl-[protein] + ATP = O-phospho-L-threonyl-[protein] + ADP + H(+)</text>
        <dbReference type="Rhea" id="RHEA:46608"/>
        <dbReference type="Rhea" id="RHEA-COMP:11060"/>
        <dbReference type="Rhea" id="RHEA-COMP:11605"/>
        <dbReference type="ChEBI" id="CHEBI:15378"/>
        <dbReference type="ChEBI" id="CHEBI:30013"/>
        <dbReference type="ChEBI" id="CHEBI:30616"/>
        <dbReference type="ChEBI" id="CHEBI:61977"/>
        <dbReference type="ChEBI" id="CHEBI:456216"/>
        <dbReference type="EC" id="2.7.11.24"/>
    </reaction>
</comment>
<comment type="cofactor">
    <cofactor evidence="1">
        <name>Mg(2+)</name>
        <dbReference type="ChEBI" id="CHEBI:18420"/>
    </cofactor>
</comment>
<comment type="activity regulation">
    <text>Activated by tyrosine and threonine phosphorylation after pheromone treatment or carbon/nitrogen limitation.</text>
</comment>
<comment type="subunit">
    <text>In the nucleus, KSS1 forms a complex with DIG1, DIG2 and STE12; in contrast to FUS3 the interaction of KSS1 with STE12 does not depend on DIG1 and DIG2. Phosphorylated KSS1 shows reduced interaction with STE12. During pheromone activation and phosphorylation, KSS1 forms a membrane-associated complex with the scaffold protein STE5, the MAPKK STE7, the MAPKKK STE11, and the G-protein beta subunit GBB/STE4; interacting directly with POF1, STE7 and STE5 proteins.</text>
</comment>
<comment type="interaction">
    <interactant intactId="EBI-9945">
        <id>P14681</id>
    </interactant>
    <interactant intactId="EBI-3480">
        <id>P33306</id>
        <label>BCK2</label>
    </interactant>
    <organismsDiffer>false</organismsDiffer>
    <experiments>5</experiments>
</comment>
<comment type="interaction">
    <interactant intactId="EBI-9945">
        <id>P14681</id>
    </interactant>
    <interactant intactId="EBI-29752">
        <id>Q03063</id>
        <label>DIG1</label>
    </interactant>
    <organismsDiffer>false</organismsDiffer>
    <experiments>5</experiments>
</comment>
<comment type="interaction">
    <interactant intactId="EBI-9945">
        <id>P14681</id>
    </interactant>
    <interactant intactId="EBI-34019">
        <id>Q03373</id>
        <label>DIG2</label>
    </interactant>
    <organismsDiffer>false</organismsDiffer>
    <experiments>5</experiments>
</comment>
<comment type="interaction">
    <interactant intactId="EBI-9945">
        <id>P14681</id>
    </interactant>
    <interactant intactId="EBI-7193">
        <id>P16892</id>
        <label>FUS3</label>
    </interactant>
    <organismsDiffer>false</organismsDiffer>
    <experiments>2</experiments>
</comment>
<comment type="interaction">
    <interactant intactId="EBI-9945">
        <id>P14681</id>
    </interactant>
    <interactant intactId="EBI-18259">
        <id>P23561</id>
        <label>STE11</label>
    </interactant>
    <organismsDiffer>false</organismsDiffer>
    <experiments>6</experiments>
</comment>
<comment type="interaction">
    <interactant intactId="EBI-9945">
        <id>P14681</id>
    </interactant>
    <interactant intactId="EBI-18264">
        <id>P13574</id>
        <label>STE12</label>
    </interactant>
    <organismsDiffer>false</organismsDiffer>
    <experiments>8</experiments>
</comment>
<comment type="interaction">
    <interactant intactId="EBI-9945">
        <id>P14681</id>
    </interactant>
    <interactant intactId="EBI-18389">
        <id>P06784</id>
        <label>STE7</label>
    </interactant>
    <organismsDiffer>false</organismsDiffer>
    <experiments>17</experiments>
</comment>
<comment type="subcellular location">
    <subcellularLocation>
        <location evidence="5">Nucleus</location>
    </subcellularLocation>
    <subcellularLocation>
        <location evidence="5">Cytoplasm</location>
    </subcellularLocation>
    <subcellularLocation>
        <location evidence="5">Periplasm</location>
    </subcellularLocation>
    <text>KSS1 shuttles rapidly between the cytoplasm and the nucleus independent of its activation state.</text>
</comment>
<comment type="domain">
    <text>The TXY motif contains the threonine and tyrosine residues whose phosphorylation activates the MAP kinases.</text>
</comment>
<comment type="PTM">
    <text evidence="9">Dually phosphorylated on Thr-183 and Tyr-185 by STE7 in response to pheromone or carbon/nitrogen limitation, which activates the enzyme. Activated FUS3 down-regulates KSS1 phosphorylation.</text>
</comment>
<comment type="miscellaneous">
    <text evidence="8">Present with 5480 molecules/cell in log phase SD medium.</text>
</comment>
<comment type="similarity">
    <text evidence="2">Belongs to the protein kinase superfamily. Ser/Thr protein kinase family. MAP kinase subfamily. HOG1 sub-subfamily.</text>
</comment>
<dbReference type="EC" id="2.7.11.24"/>
<dbReference type="EMBL" id="M26398">
    <property type="protein sequence ID" value="AAA34882.1"/>
    <property type="molecule type" value="Genomic_DNA"/>
</dbReference>
<dbReference type="EMBL" id="DQ115391">
    <property type="protein sequence ID" value="AAZ22456.1"/>
    <property type="molecule type" value="Genomic_DNA"/>
</dbReference>
<dbReference type="EMBL" id="Z72825">
    <property type="protein sequence ID" value="CAA97038.1"/>
    <property type="molecule type" value="Genomic_DNA"/>
</dbReference>
<dbReference type="EMBL" id="AY557773">
    <property type="protein sequence ID" value="AAS56099.1"/>
    <property type="molecule type" value="Genomic_DNA"/>
</dbReference>
<dbReference type="EMBL" id="BK006941">
    <property type="protein sequence ID" value="DAA08139.1"/>
    <property type="molecule type" value="Genomic_DNA"/>
</dbReference>
<dbReference type="PIR" id="A33297">
    <property type="entry name" value="A33297"/>
</dbReference>
<dbReference type="RefSeq" id="NP_011554.3">
    <property type="nucleotide sequence ID" value="NM_001181169.3"/>
</dbReference>
<dbReference type="SMR" id="P14681"/>
<dbReference type="BioGRID" id="33287">
    <property type="interactions" value="223"/>
</dbReference>
<dbReference type="DIP" id="DIP-60N"/>
<dbReference type="ELM" id="P14681"/>
<dbReference type="FunCoup" id="P14681">
    <property type="interactions" value="958"/>
</dbReference>
<dbReference type="IntAct" id="P14681">
    <property type="interactions" value="80"/>
</dbReference>
<dbReference type="MINT" id="P14681"/>
<dbReference type="STRING" id="4932.YGR040W"/>
<dbReference type="iPTMnet" id="P14681"/>
<dbReference type="PaxDb" id="4932-YGR040W"/>
<dbReference type="PeptideAtlas" id="P14681"/>
<dbReference type="EnsemblFungi" id="YGR040W_mRNA">
    <property type="protein sequence ID" value="YGR040W"/>
    <property type="gene ID" value="YGR040W"/>
</dbReference>
<dbReference type="GeneID" id="852931"/>
<dbReference type="KEGG" id="sce:YGR040W"/>
<dbReference type="AGR" id="SGD:S000003272"/>
<dbReference type="SGD" id="S000003272">
    <property type="gene designation" value="KSS1"/>
</dbReference>
<dbReference type="VEuPathDB" id="FungiDB:YGR040W"/>
<dbReference type="eggNOG" id="KOG0660">
    <property type="taxonomic scope" value="Eukaryota"/>
</dbReference>
<dbReference type="HOGENOM" id="CLU_000288_181_1_1"/>
<dbReference type="InParanoid" id="P14681"/>
<dbReference type="OMA" id="CYFLYQM"/>
<dbReference type="OrthoDB" id="192887at2759"/>
<dbReference type="BioCyc" id="YEAST:G3O-30760-MONOMER"/>
<dbReference type="BRENDA" id="2.7.11.24">
    <property type="organism ID" value="984"/>
</dbReference>
<dbReference type="Reactome" id="R-SCE-110056">
    <property type="pathway name" value="MAPK3 (ERK1) activation"/>
</dbReference>
<dbReference type="Reactome" id="R-SCE-111995">
    <property type="pathway name" value="phospho-PLA2 pathway"/>
</dbReference>
<dbReference type="Reactome" id="R-SCE-112409">
    <property type="pathway name" value="RAF-independent MAPK1/3 activation"/>
</dbReference>
<dbReference type="Reactome" id="R-SCE-112411">
    <property type="pathway name" value="MAPK1 (ERK2) activation"/>
</dbReference>
<dbReference type="Reactome" id="R-SCE-170968">
    <property type="pathway name" value="Frs2-mediated activation"/>
</dbReference>
<dbReference type="Reactome" id="R-SCE-198753">
    <property type="pathway name" value="ERK/MAPK targets"/>
</dbReference>
<dbReference type="Reactome" id="R-SCE-202670">
    <property type="pathway name" value="ERKs are inactivated"/>
</dbReference>
<dbReference type="Reactome" id="R-SCE-2559582">
    <property type="pathway name" value="Senescence-Associated Secretory Phenotype (SASP)"/>
</dbReference>
<dbReference type="Reactome" id="R-SCE-3371453">
    <property type="pathway name" value="Regulation of HSF1-mediated heat shock response"/>
</dbReference>
<dbReference type="Reactome" id="R-SCE-375165">
    <property type="pathway name" value="NCAM signaling for neurite out-growth"/>
</dbReference>
<dbReference type="Reactome" id="R-SCE-4086398">
    <property type="pathway name" value="Ca2+ pathway"/>
</dbReference>
<dbReference type="Reactome" id="R-SCE-437239">
    <property type="pathway name" value="Recycling pathway of L1"/>
</dbReference>
<dbReference type="Reactome" id="R-SCE-445144">
    <property type="pathway name" value="Signal transduction by L1"/>
</dbReference>
<dbReference type="Reactome" id="R-SCE-450341">
    <property type="pathway name" value="Activation of the AP-1 family of transcription factors"/>
</dbReference>
<dbReference type="Reactome" id="R-SCE-5673001">
    <property type="pathway name" value="RAF/MAP kinase cascade"/>
</dbReference>
<dbReference type="Reactome" id="R-SCE-5674135">
    <property type="pathway name" value="MAP2K and MAPK activation"/>
</dbReference>
<dbReference type="Reactome" id="R-SCE-5674499">
    <property type="pathway name" value="Negative feedback regulation of MAPK pathway"/>
</dbReference>
<dbReference type="Reactome" id="R-SCE-5675221">
    <property type="pathway name" value="Negative regulation of MAPK pathway"/>
</dbReference>
<dbReference type="Reactome" id="R-SCE-5687128">
    <property type="pathway name" value="MAPK6/MAPK4 signaling"/>
</dbReference>
<dbReference type="Reactome" id="R-SCE-6798695">
    <property type="pathway name" value="Neutrophil degranulation"/>
</dbReference>
<dbReference type="Reactome" id="R-SCE-881907">
    <property type="pathway name" value="Gastrin-CREB signalling pathway via PKC and MAPK"/>
</dbReference>
<dbReference type="Reactome" id="R-SCE-9634635">
    <property type="pathway name" value="Estrogen-stimulated signaling through PRKCZ"/>
</dbReference>
<dbReference type="Reactome" id="R-SCE-9856649">
    <property type="pathway name" value="Transcriptional and post-translational regulation of MITF-M expression and activity"/>
</dbReference>
<dbReference type="BioGRID-ORCS" id="852931">
    <property type="hits" value="1 hit in 13 CRISPR screens"/>
</dbReference>
<dbReference type="PRO" id="PR:P14681"/>
<dbReference type="Proteomes" id="UP000002311">
    <property type="component" value="Chromosome VII"/>
</dbReference>
<dbReference type="RNAct" id="P14681">
    <property type="molecule type" value="protein"/>
</dbReference>
<dbReference type="GO" id="GO:0005935">
    <property type="term" value="C:cellular bud neck"/>
    <property type="evidence" value="ECO:0000314"/>
    <property type="project" value="SGD"/>
</dbReference>
<dbReference type="GO" id="GO:0005737">
    <property type="term" value="C:cytoplasm"/>
    <property type="evidence" value="ECO:0000318"/>
    <property type="project" value="GO_Central"/>
</dbReference>
<dbReference type="GO" id="GO:0005634">
    <property type="term" value="C:nucleus"/>
    <property type="evidence" value="ECO:0000314"/>
    <property type="project" value="SGD"/>
</dbReference>
<dbReference type="GO" id="GO:0042597">
    <property type="term" value="C:periplasmic space"/>
    <property type="evidence" value="ECO:0007669"/>
    <property type="project" value="UniProtKB-SubCell"/>
</dbReference>
<dbReference type="GO" id="GO:0005524">
    <property type="term" value="F:ATP binding"/>
    <property type="evidence" value="ECO:0007669"/>
    <property type="project" value="UniProtKB-KW"/>
</dbReference>
<dbReference type="GO" id="GO:0004707">
    <property type="term" value="F:MAP kinase activity"/>
    <property type="evidence" value="ECO:0000314"/>
    <property type="project" value="SGD"/>
</dbReference>
<dbReference type="GO" id="GO:0004672">
    <property type="term" value="F:protein kinase activity"/>
    <property type="evidence" value="ECO:0007005"/>
    <property type="project" value="SGD"/>
</dbReference>
<dbReference type="GO" id="GO:0106310">
    <property type="term" value="F:protein serine kinase activity"/>
    <property type="evidence" value="ECO:0007669"/>
    <property type="project" value="RHEA"/>
</dbReference>
<dbReference type="GO" id="GO:0004674">
    <property type="term" value="F:protein serine/threonine kinase activity"/>
    <property type="evidence" value="ECO:0000318"/>
    <property type="project" value="GO_Central"/>
</dbReference>
<dbReference type="GO" id="GO:0035556">
    <property type="term" value="P:intracellular signal transduction"/>
    <property type="evidence" value="ECO:0000318"/>
    <property type="project" value="GO_Central"/>
</dbReference>
<dbReference type="GO" id="GO:0001403">
    <property type="term" value="P:invasive growth in response to glucose limitation"/>
    <property type="evidence" value="ECO:0000315"/>
    <property type="project" value="SGD"/>
</dbReference>
<dbReference type="GO" id="GO:0000750">
    <property type="term" value="P:pheromone-dependent signal transduction involved in conjugation with cellular fusion"/>
    <property type="evidence" value="ECO:0000315"/>
    <property type="project" value="SGD"/>
</dbReference>
<dbReference type="GO" id="GO:0010973">
    <property type="term" value="P:positive regulation of division septum assembly"/>
    <property type="evidence" value="ECO:0000316"/>
    <property type="project" value="SGD"/>
</dbReference>
<dbReference type="GO" id="GO:0000749">
    <property type="term" value="P:response to pheromone triggering conjugation with cellular fusion"/>
    <property type="evidence" value="ECO:0000314"/>
    <property type="project" value="SGD"/>
</dbReference>
<dbReference type="GO" id="GO:0001402">
    <property type="term" value="P:signal transduction involved in filamentous growth"/>
    <property type="evidence" value="ECO:0000315"/>
    <property type="project" value="SGD"/>
</dbReference>
<dbReference type="FunFam" id="1.10.510.10:FF:000206">
    <property type="entry name" value="Mitogen-activated protein kinase"/>
    <property type="match status" value="1"/>
</dbReference>
<dbReference type="FunFam" id="3.30.200.20:FF:000046">
    <property type="entry name" value="Mitogen-activated protein kinase"/>
    <property type="match status" value="1"/>
</dbReference>
<dbReference type="Gene3D" id="3.30.200.20">
    <property type="entry name" value="Phosphorylase Kinase, domain 1"/>
    <property type="match status" value="1"/>
</dbReference>
<dbReference type="Gene3D" id="1.10.510.10">
    <property type="entry name" value="Transferase(Phosphotransferase) domain 1"/>
    <property type="match status" value="1"/>
</dbReference>
<dbReference type="InterPro" id="IPR011009">
    <property type="entry name" value="Kinase-like_dom_sf"/>
</dbReference>
<dbReference type="InterPro" id="IPR050117">
    <property type="entry name" value="MAP_kinase"/>
</dbReference>
<dbReference type="InterPro" id="IPR003527">
    <property type="entry name" value="MAP_kinase_CS"/>
</dbReference>
<dbReference type="InterPro" id="IPR000719">
    <property type="entry name" value="Prot_kinase_dom"/>
</dbReference>
<dbReference type="InterPro" id="IPR017441">
    <property type="entry name" value="Protein_kinase_ATP_BS"/>
</dbReference>
<dbReference type="InterPro" id="IPR008271">
    <property type="entry name" value="Ser/Thr_kinase_AS"/>
</dbReference>
<dbReference type="PANTHER" id="PTHR24055">
    <property type="entry name" value="MITOGEN-ACTIVATED PROTEIN KINASE"/>
    <property type="match status" value="1"/>
</dbReference>
<dbReference type="Pfam" id="PF00069">
    <property type="entry name" value="Pkinase"/>
    <property type="match status" value="1"/>
</dbReference>
<dbReference type="SMART" id="SM00220">
    <property type="entry name" value="S_TKc"/>
    <property type="match status" value="1"/>
</dbReference>
<dbReference type="SUPFAM" id="SSF56112">
    <property type="entry name" value="Protein kinase-like (PK-like)"/>
    <property type="match status" value="1"/>
</dbReference>
<dbReference type="PROSITE" id="PS01351">
    <property type="entry name" value="MAPK"/>
    <property type="match status" value="1"/>
</dbReference>
<dbReference type="PROSITE" id="PS00107">
    <property type="entry name" value="PROTEIN_KINASE_ATP"/>
    <property type="match status" value="1"/>
</dbReference>
<dbReference type="PROSITE" id="PS50011">
    <property type="entry name" value="PROTEIN_KINASE_DOM"/>
    <property type="match status" value="1"/>
</dbReference>
<dbReference type="PROSITE" id="PS00108">
    <property type="entry name" value="PROTEIN_KINASE_ST"/>
    <property type="match status" value="1"/>
</dbReference>
<gene>
    <name type="primary">KSS1</name>
    <name type="ordered locus">YGR040W</name>
</gene>
<organism>
    <name type="scientific">Saccharomyces cerevisiae (strain ATCC 204508 / S288c)</name>
    <name type="common">Baker's yeast</name>
    <dbReference type="NCBI Taxonomy" id="559292"/>
    <lineage>
        <taxon>Eukaryota</taxon>
        <taxon>Fungi</taxon>
        <taxon>Dikarya</taxon>
        <taxon>Ascomycota</taxon>
        <taxon>Saccharomycotina</taxon>
        <taxon>Saccharomycetes</taxon>
        <taxon>Saccharomycetales</taxon>
        <taxon>Saccharomycetaceae</taxon>
        <taxon>Saccharomyces</taxon>
    </lineage>
</organism>
<evidence type="ECO:0000250" key="1"/>
<evidence type="ECO:0000255" key="2">
    <source>
        <dbReference type="PROSITE-ProRule" id="PRU00159"/>
    </source>
</evidence>
<evidence type="ECO:0000255" key="3">
    <source>
        <dbReference type="PROSITE-ProRule" id="PRU10027"/>
    </source>
</evidence>
<evidence type="ECO:0000269" key="4">
    <source>
    </source>
</evidence>
<evidence type="ECO:0000269" key="5">
    <source>
    </source>
</evidence>
<evidence type="ECO:0000269" key="6">
    <source>
    </source>
</evidence>
<evidence type="ECO:0000269" key="7">
    <source>
    </source>
</evidence>
<evidence type="ECO:0000269" key="8">
    <source>
    </source>
</evidence>
<evidence type="ECO:0000269" key="9">
    <source>
    </source>
</evidence>
<evidence type="ECO:0000269" key="10">
    <source>
    </source>
</evidence>
<evidence type="ECO:0000269" key="11">
    <source>
    </source>
</evidence>
<evidence type="ECO:0000269" key="12">
    <source>
    </source>
</evidence>
<evidence type="ECO:0000269" key="13">
    <source>
    </source>
</evidence>
<evidence type="ECO:0000269" key="14">
    <source>
    </source>
</evidence>
<evidence type="ECO:0007744" key="15">
    <source>
    </source>
</evidence>
<name>KSS1_YEAST</name>
<protein>
    <recommendedName>
        <fullName>Mitogen-activated protein kinase KSS1</fullName>
        <shortName>MAP kinase KSS1</shortName>
        <ecNumber>2.7.11.24</ecNumber>
    </recommendedName>
    <alternativeName>
        <fullName>Kinase suppressor of SST2</fullName>
    </alternativeName>
</protein>
<sequence length="368" mass="42692">MARTITFDIPSQYKLVDLIGEGAYGTVCSAIHKPSGIKVAIKKIQPFSKKLFVTRTIREIKLLRYFHEHENIISILDKVRPVSIDKLNAVYLVEELMETDLQKVINNQNSGFSTLSDDHVQYFTYQILRALKSIHSAQVIHRDIKPSNLLLNSNCDLKVCDFGLARCLASSSDSRETLVGFMTEYVATRWYRAPEIMLTFQEYTTAMDIWSCGCILAEMVSGKPLFPGRDYHHQLWLILEVLGTPSFEDFNQIKSKRAKEYIANLPMRPPLPWETVWSKTDLNPDMIDLLDKMLQFNPDKRISAAEALRHPYLAMYHDPSDEPEYPPLNLDDEFWKLDNKIMRPEEEEEVPIEMLKDMLYDELMKTME</sequence>
<proteinExistence type="evidence at protein level"/>
<reference key="1">
    <citation type="journal article" date="1989" name="Cell">
        <title>A putative protein kinase overcomes pheromone-induced arrest of cell cycling in S. cerevisiae.</title>
        <authorList>
            <person name="Courchesne W.E."/>
            <person name="Kunisawa R."/>
            <person name="Thorner J."/>
        </authorList>
    </citation>
    <scope>NUCLEOTIDE SEQUENCE [GENOMIC DNA]</scope>
</reference>
<reference key="2">
    <citation type="journal article" date="2005" name="Nat. Genet.">
        <title>Quantitative trait loci mapped to single-nucleotide resolution in yeast.</title>
        <authorList>
            <person name="Deutschbauer A.M."/>
            <person name="Davis R.W."/>
        </authorList>
    </citation>
    <scope>NUCLEOTIDE SEQUENCE [GENOMIC DNA]</scope>
    <source>
        <strain>SK1</strain>
    </source>
</reference>
<reference key="3">
    <citation type="journal article" date="1997" name="Yeast">
        <title>Sequence analysis of 203 kilobases from Saccharomyces cerevisiae chromosome VII.</title>
        <authorList>
            <person name="Rieger M."/>
            <person name="Brueckner M."/>
            <person name="Schaefer M."/>
            <person name="Mueller-Auer S."/>
        </authorList>
    </citation>
    <scope>NUCLEOTIDE SEQUENCE [GENOMIC DNA]</scope>
    <source>
        <strain>ATCC 204508 / S288c</strain>
    </source>
</reference>
<reference key="4">
    <citation type="journal article" date="1997" name="Nature">
        <title>The nucleotide sequence of Saccharomyces cerevisiae chromosome VII.</title>
        <authorList>
            <person name="Tettelin H."/>
            <person name="Agostoni-Carbone M.L."/>
            <person name="Albermann K."/>
            <person name="Albers M."/>
            <person name="Arroyo J."/>
            <person name="Backes U."/>
            <person name="Barreiros T."/>
            <person name="Bertani I."/>
            <person name="Bjourson A.J."/>
            <person name="Brueckner M."/>
            <person name="Bruschi C.V."/>
            <person name="Carignani G."/>
            <person name="Castagnoli L."/>
            <person name="Cerdan E."/>
            <person name="Clemente M.L."/>
            <person name="Coblenz A."/>
            <person name="Coglievina M."/>
            <person name="Coissac E."/>
            <person name="Defoor E."/>
            <person name="Del Bino S."/>
            <person name="Delius H."/>
            <person name="Delneri D."/>
            <person name="de Wergifosse P."/>
            <person name="Dujon B."/>
            <person name="Durand P."/>
            <person name="Entian K.-D."/>
            <person name="Eraso P."/>
            <person name="Escribano V."/>
            <person name="Fabiani L."/>
            <person name="Fartmann B."/>
            <person name="Feroli F."/>
            <person name="Feuermann M."/>
            <person name="Frontali L."/>
            <person name="Garcia-Gonzalez M."/>
            <person name="Garcia-Saez M.I."/>
            <person name="Goffeau A."/>
            <person name="Guerreiro P."/>
            <person name="Hani J."/>
            <person name="Hansen M."/>
            <person name="Hebling U."/>
            <person name="Hernandez K."/>
            <person name="Heumann K."/>
            <person name="Hilger F."/>
            <person name="Hofmann B."/>
            <person name="Indge K.J."/>
            <person name="James C.M."/>
            <person name="Klima R."/>
            <person name="Koetter P."/>
            <person name="Kramer B."/>
            <person name="Kramer W."/>
            <person name="Lauquin G."/>
            <person name="Leuther H."/>
            <person name="Louis E.J."/>
            <person name="Maillier E."/>
            <person name="Marconi A."/>
            <person name="Martegani E."/>
            <person name="Mazon M.J."/>
            <person name="Mazzoni C."/>
            <person name="McReynolds A.D.K."/>
            <person name="Melchioretto P."/>
            <person name="Mewes H.-W."/>
            <person name="Minenkova O."/>
            <person name="Mueller-Auer S."/>
            <person name="Nawrocki A."/>
            <person name="Netter P."/>
            <person name="Neu R."/>
            <person name="Nombela C."/>
            <person name="Oliver S.G."/>
            <person name="Panzeri L."/>
            <person name="Paoluzi S."/>
            <person name="Plevani P."/>
            <person name="Portetelle D."/>
            <person name="Portillo F."/>
            <person name="Potier S."/>
            <person name="Purnelle B."/>
            <person name="Rieger M."/>
            <person name="Riles L."/>
            <person name="Rinaldi T."/>
            <person name="Robben J."/>
            <person name="Rodrigues-Pousada C."/>
            <person name="Rodriguez-Belmonte E."/>
            <person name="Rodriguez-Torres A.M."/>
            <person name="Rose M."/>
            <person name="Ruzzi M."/>
            <person name="Saliola M."/>
            <person name="Sanchez-Perez M."/>
            <person name="Schaefer B."/>
            <person name="Schaefer M."/>
            <person name="Scharfe M."/>
            <person name="Schmidheini T."/>
            <person name="Schreer A."/>
            <person name="Skala J."/>
            <person name="Souciet J.-L."/>
            <person name="Steensma H.Y."/>
            <person name="Talla E."/>
            <person name="Thierry A."/>
            <person name="Vandenbol M."/>
            <person name="van der Aart Q.J.M."/>
            <person name="Van Dyck L."/>
            <person name="Vanoni M."/>
            <person name="Verhasselt P."/>
            <person name="Voet M."/>
            <person name="Volckaert G."/>
            <person name="Wambutt R."/>
            <person name="Watson M.D."/>
            <person name="Weber N."/>
            <person name="Wedler E."/>
            <person name="Wedler H."/>
            <person name="Wipfli P."/>
            <person name="Wolf K."/>
            <person name="Wright L.F."/>
            <person name="Zaccaria P."/>
            <person name="Zimmermann M."/>
            <person name="Zollner A."/>
            <person name="Kleine K."/>
        </authorList>
    </citation>
    <scope>NUCLEOTIDE SEQUENCE [LARGE SCALE GENOMIC DNA]</scope>
    <source>
        <strain>ATCC 204508 / S288c</strain>
    </source>
</reference>
<reference key="5">
    <citation type="journal article" date="2014" name="G3 (Bethesda)">
        <title>The reference genome sequence of Saccharomyces cerevisiae: Then and now.</title>
        <authorList>
            <person name="Engel S.R."/>
            <person name="Dietrich F.S."/>
            <person name="Fisk D.G."/>
            <person name="Binkley G."/>
            <person name="Balakrishnan R."/>
            <person name="Costanzo M.C."/>
            <person name="Dwight S.S."/>
            <person name="Hitz B.C."/>
            <person name="Karra K."/>
            <person name="Nash R.S."/>
            <person name="Weng S."/>
            <person name="Wong E.D."/>
            <person name="Lloyd P."/>
            <person name="Skrzypek M.S."/>
            <person name="Miyasato S.R."/>
            <person name="Simison M."/>
            <person name="Cherry J.M."/>
        </authorList>
    </citation>
    <scope>GENOME REANNOTATION</scope>
    <source>
        <strain>ATCC 204508 / S288c</strain>
    </source>
</reference>
<reference key="6">
    <citation type="journal article" date="2007" name="Genome Res.">
        <title>Approaching a complete repository of sequence-verified protein-encoding clones for Saccharomyces cerevisiae.</title>
        <authorList>
            <person name="Hu Y."/>
            <person name="Rolfs A."/>
            <person name="Bhullar B."/>
            <person name="Murthy T.V.S."/>
            <person name="Zhu C."/>
            <person name="Berger M.F."/>
            <person name="Camargo A.A."/>
            <person name="Kelley F."/>
            <person name="McCarron S."/>
            <person name="Jepson D."/>
            <person name="Richardson A."/>
            <person name="Raphael J."/>
            <person name="Moreira D."/>
            <person name="Taycher E."/>
            <person name="Zuo D."/>
            <person name="Mohr S."/>
            <person name="Kane M.F."/>
            <person name="Williamson J."/>
            <person name="Simpson A.J.G."/>
            <person name="Bulyk M.L."/>
            <person name="Harlow E."/>
            <person name="Marsischky G."/>
            <person name="Kolodner R.D."/>
            <person name="LaBaer J."/>
        </authorList>
    </citation>
    <scope>NUCLEOTIDE SEQUENCE [GENOMIC DNA]</scope>
    <source>
        <strain>ATCC 204508 / S288c</strain>
    </source>
</reference>
<reference key="7">
    <citation type="journal article" date="1992" name="Genes Dev.">
        <title>Signal transduction in Saccharomyces cerevisiae requires tyrosine and threonine phosphorylation of FUS3 and KSS1.</title>
        <authorList>
            <person name="Gartner A."/>
            <person name="Nasmyth K."/>
            <person name="Ammerer G."/>
        </authorList>
    </citation>
    <scope>PHOSPHORYLATION</scope>
</reference>
<reference key="8">
    <citation type="journal article" date="1996" name="Genes Dev.">
        <title>Two novel targets of the MAP kinase Kss1 are negative regulators of invasive growth in the yeast Saccharomyces cerevisiae.</title>
        <authorList>
            <person name="Cook J.G."/>
            <person name="Bardwell L."/>
            <person name="Kron S.J."/>
            <person name="Thorner J."/>
        </authorList>
    </citation>
    <scope>FUNCTION</scope>
    <scope>COMPLEX WITH DIG1; DIG2 AND STE12</scope>
</reference>
<reference key="9">
    <citation type="journal article" date="1997" name="Cell">
        <title>MAP kinases with distinct inhibitory functions impart signaling specificity during yeast differentiation.</title>
        <authorList>
            <person name="Madhani H.D."/>
            <person name="Styles C.A."/>
            <person name="Fink G.R."/>
        </authorList>
    </citation>
    <scope>FUNCTION</scope>
    <scope>INHIBITION OF FILAMENTATION</scope>
</reference>
<reference key="10">
    <citation type="journal article" date="1998" name="Genes Dev.">
        <title>Repression of yeast Ste12 transcription factor by direct binding of unphosphorylated Kss1 MAPK and its regulation by the Ste7 MEK.</title>
        <authorList>
            <person name="Bardwell L."/>
            <person name="Cook J.G."/>
            <person name="Voora D."/>
            <person name="Baggott D.M."/>
            <person name="Martinez A.R."/>
            <person name="Thorner J."/>
        </authorList>
    </citation>
    <scope>FUNCTION</scope>
    <scope>INTERACTION WITH STE12</scope>
</reference>
<reference key="11">
    <citation type="journal article" date="1998" name="Proc. Natl. Acad. Sci. U.S.A.">
        <title>Differential regulation of transcription: repression by unactivated mitogen-activated protein kinase Kss1 requires the Dig1 and Dig2 proteins.</title>
        <authorList>
            <person name="Bardwell L."/>
            <person name="Cook J.G."/>
            <person name="Zhu-Shimoni J.X."/>
            <person name="Voora D."/>
            <person name="Thorner J."/>
        </authorList>
    </citation>
    <scope>FUNCTION</scope>
    <scope>FUNCTIONAL DEPENDENCE ON DIG1/DIG2</scope>
</reference>
<reference key="12">
    <citation type="journal article" date="2001" name="Mol. Cell">
        <title>Specificity of MAP kinase signaling in yeast differentiation involves transient versus sustained MAPK activation.</title>
        <authorList>
            <person name="Sabbagh W. Jr."/>
            <person name="Flatauer L.J."/>
            <person name="Bardwell A.J."/>
            <person name="Bardwell L."/>
        </authorList>
    </citation>
    <scope>FUNCTION</scope>
    <scope>REGULATION OF ACTIVITY BY FUS3</scope>
</reference>
<reference key="13">
    <citation type="journal article" date="2001" name="Nat. Cell Biol.">
        <title>MAP kinase dynamics in response to pheromones in budding yeast.</title>
        <authorList>
            <person name="van Drogen F."/>
            <person name="Stucke V.M."/>
            <person name="Jorritsma G."/>
            <person name="Peter M."/>
        </authorList>
    </citation>
    <scope>SUBCELLULAR LOCATION</scope>
</reference>
<reference key="14">
    <citation type="journal article" date="2003" name="Cell">
        <title>Program-specific distribution of a transcription factor dependent on partner transcription factor and MAPK signaling.</title>
        <authorList>
            <person name="Zeitlinger J."/>
            <person name="Simon I."/>
            <person name="Harbison C.T."/>
            <person name="Hannett N.M."/>
            <person name="Volkert T.L."/>
            <person name="Fink G.R."/>
            <person name="Young R.A."/>
        </authorList>
    </citation>
    <scope>FUNCTION</scope>
    <scope>REGULATION OF STE12 PROMOTER SELECTIVITY</scope>
</reference>
<reference key="15">
    <citation type="journal article" date="2003" name="Nature">
        <title>Srb10/Cdk8 regulates yeast filamentous growth by phosphorylating the transcription factor Ste12.</title>
        <authorList>
            <person name="Nelson C."/>
            <person name="Goto S."/>
            <person name="Lund K."/>
            <person name="Hung W."/>
            <person name="Sadowski I."/>
        </authorList>
    </citation>
    <scope>FUNCTION</scope>
    <scope>STE12 STABILITY</scope>
</reference>
<reference key="16">
    <citation type="journal article" date="2003" name="Nature">
        <title>Global analysis of protein expression in yeast.</title>
        <authorList>
            <person name="Ghaemmaghami S."/>
            <person name="Huh W.-K."/>
            <person name="Bower K."/>
            <person name="Howson R.W."/>
            <person name="Belle A."/>
            <person name="Dephoure N."/>
            <person name="O'Shea E.K."/>
            <person name="Weissman J.S."/>
        </authorList>
    </citation>
    <scope>LEVEL OF PROTEIN EXPRESSION [LARGE SCALE ANALYSIS]</scope>
</reference>
<reference key="17">
    <citation type="journal article" date="2007" name="J. Proteome Res.">
        <title>Large-scale phosphorylation analysis of alpha-factor-arrested Saccharomyces cerevisiae.</title>
        <authorList>
            <person name="Li X."/>
            <person name="Gerber S.A."/>
            <person name="Rudner A.D."/>
            <person name="Beausoleil S.A."/>
            <person name="Haas W."/>
            <person name="Villen J."/>
            <person name="Elias J.E."/>
            <person name="Gygi S.P."/>
        </authorList>
    </citation>
    <scope>PHOSPHORYLATION [LARGE SCALE ANALYSIS] AT THR-183 AND TYR-185</scope>
    <scope>IDENTIFICATION BY MASS SPECTROMETRY [LARGE SCALE ANALYSIS]</scope>
    <source>
        <strain>ADR376</strain>
    </source>
</reference>
<reference key="18">
    <citation type="journal article" date="2011" name="Genes Dev.">
        <title>Diverse protein kinase interactions identified by protein microarrays reveal novel connections between cellular processes.</title>
        <authorList>
            <person name="Fasolo J."/>
            <person name="Sboner A."/>
            <person name="Sun M.G."/>
            <person name="Yu H."/>
            <person name="Chen R."/>
            <person name="Sharon D."/>
            <person name="Kim P.M."/>
            <person name="Gerstein M."/>
            <person name="Snyder M."/>
        </authorList>
    </citation>
    <scope>FUNCTION</scope>
    <scope>INTERACTION WITH POF1</scope>
</reference>
<accession>P14681</accession>
<accession>D6VUH8</accession>
<accession>Q45U43</accession>
<keyword id="KW-0067">ATP-binding</keyword>
<keyword id="KW-0131">Cell cycle</keyword>
<keyword id="KW-0963">Cytoplasm</keyword>
<keyword id="KW-0418">Kinase</keyword>
<keyword id="KW-0547">Nucleotide-binding</keyword>
<keyword id="KW-0539">Nucleus</keyword>
<keyword id="KW-0574">Periplasm</keyword>
<keyword id="KW-0597">Phosphoprotein</keyword>
<keyword id="KW-1185">Reference proteome</keyword>
<keyword id="KW-0723">Serine/threonine-protein kinase</keyword>
<keyword id="KW-0808">Transferase</keyword>
<feature type="chain" id="PRO_0000186333" description="Mitogen-activated protein kinase KSS1">
    <location>
        <begin position="1"/>
        <end position="368"/>
    </location>
</feature>
<feature type="domain" description="Protein kinase" evidence="2">
    <location>
        <begin position="13"/>
        <end position="313"/>
    </location>
</feature>
<feature type="short sequence motif" description="TXY">
    <location>
        <begin position="183"/>
        <end position="185"/>
    </location>
</feature>
<feature type="active site" description="Proton acceptor" evidence="2 3">
    <location>
        <position position="143"/>
    </location>
</feature>
<feature type="binding site" evidence="2">
    <location>
        <begin position="19"/>
        <end position="27"/>
    </location>
    <ligand>
        <name>ATP</name>
        <dbReference type="ChEBI" id="CHEBI:30616"/>
    </ligand>
</feature>
<feature type="binding site" evidence="2">
    <location>
        <position position="42"/>
    </location>
    <ligand>
        <name>ATP</name>
        <dbReference type="ChEBI" id="CHEBI:30616"/>
    </ligand>
</feature>
<feature type="modified residue" description="Phosphothreonine" evidence="15">
    <location>
        <position position="183"/>
    </location>
</feature>
<feature type="modified residue" description="Phosphotyrosine" evidence="15">
    <location>
        <position position="185"/>
    </location>
</feature>